<accession>Q8P447</accession>
<sequence length="285" mass="31536">MSTNDNWYIEHFQPTGSAIGYRISGKLDEVQSPFQKIEIYQTTDWGKLMIIDGAVMLTSRDNFFYHEMISHPALFTHAAPKRVVIIGGGDCGTLREVLKHPGVESATQCDIDEQVTRMSEKYFPELCDSNDDARAELLFDDGVAYMANCPAGSVDIVIVDSTDPVGPAEGLFNKSFYESCFKALKDDGILVQQSESPLALLDLIKEMRTEMGKAGFQSFKTLPFPQPCYPTGWWSVTMASKQANADFAFRQADAQAKGFDTLYYTAHLHTGVLVAPPFVAKALGE</sequence>
<gene>
    <name evidence="1" type="primary">speE</name>
    <name type="ordered locus">XCC3869</name>
</gene>
<reference key="1">
    <citation type="journal article" date="2002" name="Nature">
        <title>Comparison of the genomes of two Xanthomonas pathogens with differing host specificities.</title>
        <authorList>
            <person name="da Silva A.C.R."/>
            <person name="Ferro J.A."/>
            <person name="Reinach F.C."/>
            <person name="Farah C.S."/>
            <person name="Furlan L.R."/>
            <person name="Quaggio R.B."/>
            <person name="Monteiro-Vitorello C.B."/>
            <person name="Van Sluys M.A."/>
            <person name="Almeida N.F. Jr."/>
            <person name="Alves L.M.C."/>
            <person name="do Amaral A.M."/>
            <person name="Bertolini M.C."/>
            <person name="Camargo L.E.A."/>
            <person name="Camarotte G."/>
            <person name="Cannavan F."/>
            <person name="Cardozo J."/>
            <person name="Chambergo F."/>
            <person name="Ciapina L.P."/>
            <person name="Cicarelli R.M.B."/>
            <person name="Coutinho L.L."/>
            <person name="Cursino-Santos J.R."/>
            <person name="El-Dorry H."/>
            <person name="Faria J.B."/>
            <person name="Ferreira A.J.S."/>
            <person name="Ferreira R.C.C."/>
            <person name="Ferro M.I.T."/>
            <person name="Formighieri E.F."/>
            <person name="Franco M.C."/>
            <person name="Greggio C.C."/>
            <person name="Gruber A."/>
            <person name="Katsuyama A.M."/>
            <person name="Kishi L.T."/>
            <person name="Leite R.P."/>
            <person name="Lemos E.G.M."/>
            <person name="Lemos M.V.F."/>
            <person name="Locali E.C."/>
            <person name="Machado M.A."/>
            <person name="Madeira A.M.B.N."/>
            <person name="Martinez-Rossi N.M."/>
            <person name="Martins E.C."/>
            <person name="Meidanis J."/>
            <person name="Menck C.F.M."/>
            <person name="Miyaki C.Y."/>
            <person name="Moon D.H."/>
            <person name="Moreira L.M."/>
            <person name="Novo M.T.M."/>
            <person name="Okura V.K."/>
            <person name="Oliveira M.C."/>
            <person name="Oliveira V.R."/>
            <person name="Pereira H.A."/>
            <person name="Rossi A."/>
            <person name="Sena J.A.D."/>
            <person name="Silva C."/>
            <person name="de Souza R.F."/>
            <person name="Spinola L.A.F."/>
            <person name="Takita M.A."/>
            <person name="Tamura R.E."/>
            <person name="Teixeira E.C."/>
            <person name="Tezza R.I.D."/>
            <person name="Trindade dos Santos M."/>
            <person name="Truffi D."/>
            <person name="Tsai S.M."/>
            <person name="White F.F."/>
            <person name="Setubal J.C."/>
            <person name="Kitajima J.P."/>
        </authorList>
    </citation>
    <scope>NUCLEOTIDE SEQUENCE [LARGE SCALE GENOMIC DNA]</scope>
    <source>
        <strain>ATCC 33913 / DSM 3586 / NCPPB 528 / LMG 568 / P 25</strain>
    </source>
</reference>
<evidence type="ECO:0000255" key="1">
    <source>
        <dbReference type="HAMAP-Rule" id="MF_00198"/>
    </source>
</evidence>
<dbReference type="EC" id="2.5.1.16" evidence="1"/>
<dbReference type="EMBL" id="AE008922">
    <property type="protein sequence ID" value="AAM43100.1"/>
    <property type="molecule type" value="Genomic_DNA"/>
</dbReference>
<dbReference type="RefSeq" id="NP_639209.1">
    <property type="nucleotide sequence ID" value="NC_003902.1"/>
</dbReference>
<dbReference type="RefSeq" id="WP_011038944.1">
    <property type="nucleotide sequence ID" value="NC_003902.1"/>
</dbReference>
<dbReference type="SMR" id="Q8P447"/>
<dbReference type="STRING" id="190485.XCC3869"/>
<dbReference type="EnsemblBacteria" id="AAM43100">
    <property type="protein sequence ID" value="AAM43100"/>
    <property type="gene ID" value="XCC3869"/>
</dbReference>
<dbReference type="KEGG" id="xcc:XCC3869"/>
<dbReference type="PATRIC" id="fig|190485.4.peg.4140"/>
<dbReference type="eggNOG" id="COG0421">
    <property type="taxonomic scope" value="Bacteria"/>
</dbReference>
<dbReference type="HOGENOM" id="CLU_048199_0_0_6"/>
<dbReference type="OrthoDB" id="9793120at2"/>
<dbReference type="UniPathway" id="UPA00248">
    <property type="reaction ID" value="UER00314"/>
</dbReference>
<dbReference type="Proteomes" id="UP000001010">
    <property type="component" value="Chromosome"/>
</dbReference>
<dbReference type="GO" id="GO:0005829">
    <property type="term" value="C:cytosol"/>
    <property type="evidence" value="ECO:0000318"/>
    <property type="project" value="GO_Central"/>
</dbReference>
<dbReference type="GO" id="GO:0004766">
    <property type="term" value="F:spermidine synthase activity"/>
    <property type="evidence" value="ECO:0000318"/>
    <property type="project" value="GO_Central"/>
</dbReference>
<dbReference type="GO" id="GO:0008295">
    <property type="term" value="P:spermidine biosynthetic process"/>
    <property type="evidence" value="ECO:0000318"/>
    <property type="project" value="GO_Central"/>
</dbReference>
<dbReference type="CDD" id="cd02440">
    <property type="entry name" value="AdoMet_MTases"/>
    <property type="match status" value="1"/>
</dbReference>
<dbReference type="FunFam" id="3.40.50.150:FF:000290">
    <property type="entry name" value="Polyamine aminopropyltransferase"/>
    <property type="match status" value="1"/>
</dbReference>
<dbReference type="Gene3D" id="2.30.140.10">
    <property type="entry name" value="Spermidine synthase, tetramerisation domain"/>
    <property type="match status" value="1"/>
</dbReference>
<dbReference type="Gene3D" id="3.40.50.150">
    <property type="entry name" value="Vaccinia Virus protein VP39"/>
    <property type="match status" value="1"/>
</dbReference>
<dbReference type="HAMAP" id="MF_00198">
    <property type="entry name" value="Spermidine_synth"/>
    <property type="match status" value="1"/>
</dbReference>
<dbReference type="InterPro" id="IPR030374">
    <property type="entry name" value="PABS"/>
</dbReference>
<dbReference type="InterPro" id="IPR030373">
    <property type="entry name" value="PABS_CS"/>
</dbReference>
<dbReference type="InterPro" id="IPR029063">
    <property type="entry name" value="SAM-dependent_MTases_sf"/>
</dbReference>
<dbReference type="InterPro" id="IPR001045">
    <property type="entry name" value="Spermi_synthase"/>
</dbReference>
<dbReference type="InterPro" id="IPR035246">
    <property type="entry name" value="Spermidine_synt_N"/>
</dbReference>
<dbReference type="InterPro" id="IPR037163">
    <property type="entry name" value="Spermidine_synt_N_sf"/>
</dbReference>
<dbReference type="NCBIfam" id="NF002010">
    <property type="entry name" value="PRK00811.1"/>
    <property type="match status" value="1"/>
</dbReference>
<dbReference type="NCBIfam" id="TIGR00417">
    <property type="entry name" value="speE"/>
    <property type="match status" value="1"/>
</dbReference>
<dbReference type="PANTHER" id="PTHR11558:SF11">
    <property type="entry name" value="SPERMIDINE SYNTHASE"/>
    <property type="match status" value="1"/>
</dbReference>
<dbReference type="PANTHER" id="PTHR11558">
    <property type="entry name" value="SPERMIDINE/SPERMINE SYNTHASE"/>
    <property type="match status" value="1"/>
</dbReference>
<dbReference type="Pfam" id="PF17284">
    <property type="entry name" value="Spermine_synt_N"/>
    <property type="match status" value="1"/>
</dbReference>
<dbReference type="Pfam" id="PF01564">
    <property type="entry name" value="Spermine_synth"/>
    <property type="match status" value="1"/>
</dbReference>
<dbReference type="SUPFAM" id="SSF53335">
    <property type="entry name" value="S-adenosyl-L-methionine-dependent methyltransferases"/>
    <property type="match status" value="1"/>
</dbReference>
<dbReference type="PROSITE" id="PS01330">
    <property type="entry name" value="PABS_1"/>
    <property type="match status" value="1"/>
</dbReference>
<dbReference type="PROSITE" id="PS51006">
    <property type="entry name" value="PABS_2"/>
    <property type="match status" value="1"/>
</dbReference>
<comment type="function">
    <text evidence="1">Catalyzes the irreversible transfer of a propylamine group from the amino donor S-adenosylmethioninamine (decarboxy-AdoMet) to putrescine (1,4-diaminobutane) to yield spermidine.</text>
</comment>
<comment type="catalytic activity">
    <reaction evidence="1">
        <text>S-adenosyl 3-(methylsulfanyl)propylamine + putrescine = S-methyl-5'-thioadenosine + spermidine + H(+)</text>
        <dbReference type="Rhea" id="RHEA:12721"/>
        <dbReference type="ChEBI" id="CHEBI:15378"/>
        <dbReference type="ChEBI" id="CHEBI:17509"/>
        <dbReference type="ChEBI" id="CHEBI:57443"/>
        <dbReference type="ChEBI" id="CHEBI:57834"/>
        <dbReference type="ChEBI" id="CHEBI:326268"/>
        <dbReference type="EC" id="2.5.1.16"/>
    </reaction>
</comment>
<comment type="pathway">
    <text evidence="1">Amine and polyamine biosynthesis; spermidine biosynthesis; spermidine from putrescine: step 1/1.</text>
</comment>
<comment type="subunit">
    <text evidence="1">Homodimer or homotetramer.</text>
</comment>
<comment type="subcellular location">
    <subcellularLocation>
        <location evidence="1">Cytoplasm</location>
    </subcellularLocation>
</comment>
<comment type="similarity">
    <text evidence="1">Belongs to the spermidine/spermine synthase family.</text>
</comment>
<protein>
    <recommendedName>
        <fullName evidence="1">Polyamine aminopropyltransferase</fullName>
    </recommendedName>
    <alternativeName>
        <fullName evidence="1">Putrescine aminopropyltransferase</fullName>
        <shortName evidence="1">PAPT</shortName>
    </alternativeName>
    <alternativeName>
        <fullName evidence="1">Spermidine synthase</fullName>
        <shortName evidence="1">SPDS</shortName>
        <shortName evidence="1">SPDSY</shortName>
        <ecNumber evidence="1">2.5.1.16</ecNumber>
    </alternativeName>
</protein>
<name>SPEE_XANCP</name>
<feature type="chain" id="PRO_0000156520" description="Polyamine aminopropyltransferase">
    <location>
        <begin position="1"/>
        <end position="285"/>
    </location>
</feature>
<feature type="domain" description="PABS" evidence="1">
    <location>
        <begin position="5"/>
        <end position="241"/>
    </location>
</feature>
<feature type="active site" description="Proton acceptor" evidence="1">
    <location>
        <position position="160"/>
    </location>
</feature>
<feature type="binding site" evidence="1">
    <location>
        <position position="35"/>
    </location>
    <ligand>
        <name>S-methyl-5'-thioadenosine</name>
        <dbReference type="ChEBI" id="CHEBI:17509"/>
    </ligand>
</feature>
<feature type="binding site" evidence="1">
    <location>
        <position position="66"/>
    </location>
    <ligand>
        <name>spermidine</name>
        <dbReference type="ChEBI" id="CHEBI:57834"/>
    </ligand>
</feature>
<feature type="binding site" evidence="1">
    <location>
        <position position="90"/>
    </location>
    <ligand>
        <name>spermidine</name>
        <dbReference type="ChEBI" id="CHEBI:57834"/>
    </ligand>
</feature>
<feature type="binding site" evidence="1">
    <location>
        <position position="110"/>
    </location>
    <ligand>
        <name>S-methyl-5'-thioadenosine</name>
        <dbReference type="ChEBI" id="CHEBI:17509"/>
    </ligand>
</feature>
<feature type="binding site" evidence="1">
    <location>
        <begin position="141"/>
        <end position="142"/>
    </location>
    <ligand>
        <name>S-methyl-5'-thioadenosine</name>
        <dbReference type="ChEBI" id="CHEBI:17509"/>
    </ligand>
</feature>
<feature type="binding site" evidence="1">
    <location>
        <begin position="160"/>
        <end position="163"/>
    </location>
    <ligand>
        <name>spermidine</name>
        <dbReference type="ChEBI" id="CHEBI:57834"/>
    </ligand>
</feature>
<feature type="binding site" evidence="1">
    <location>
        <position position="167"/>
    </location>
    <ligand>
        <name>S-methyl-5'-thioadenosine</name>
        <dbReference type="ChEBI" id="CHEBI:17509"/>
    </ligand>
</feature>
<proteinExistence type="inferred from homology"/>
<keyword id="KW-0963">Cytoplasm</keyword>
<keyword id="KW-0620">Polyamine biosynthesis</keyword>
<keyword id="KW-1185">Reference proteome</keyword>
<keyword id="KW-0745">Spermidine biosynthesis</keyword>
<keyword id="KW-0808">Transferase</keyword>
<organism>
    <name type="scientific">Xanthomonas campestris pv. campestris (strain ATCC 33913 / DSM 3586 / NCPPB 528 / LMG 568 / P 25)</name>
    <dbReference type="NCBI Taxonomy" id="190485"/>
    <lineage>
        <taxon>Bacteria</taxon>
        <taxon>Pseudomonadati</taxon>
        <taxon>Pseudomonadota</taxon>
        <taxon>Gammaproteobacteria</taxon>
        <taxon>Lysobacterales</taxon>
        <taxon>Lysobacteraceae</taxon>
        <taxon>Xanthomonas</taxon>
    </lineage>
</organism>